<organism>
    <name type="scientific">Protobothrops flavoviridis</name>
    <name type="common">Habu</name>
    <name type="synonym">Trimeresurus flavoviridis</name>
    <dbReference type="NCBI Taxonomy" id="88087"/>
    <lineage>
        <taxon>Eukaryota</taxon>
        <taxon>Metazoa</taxon>
        <taxon>Chordata</taxon>
        <taxon>Craniata</taxon>
        <taxon>Vertebrata</taxon>
        <taxon>Euteleostomi</taxon>
        <taxon>Lepidosauria</taxon>
        <taxon>Squamata</taxon>
        <taxon>Bifurcata</taxon>
        <taxon>Unidentata</taxon>
        <taxon>Episquamata</taxon>
        <taxon>Toxicofera</taxon>
        <taxon>Serpentes</taxon>
        <taxon>Colubroidea</taxon>
        <taxon>Viperidae</taxon>
        <taxon>Crotalinae</taxon>
        <taxon>Protobothrops</taxon>
    </lineage>
</organism>
<name>TBP_PROFL</name>
<comment type="function">
    <text>General transcription factor that functions at the core of the DNA-binding multiprotein factor TFIID. Binding of TFIID to the TATA box is the initial transcriptional step of the pre-initiation complex (PIC), playing a role in the activation of eukaryotic genes transcribed by RNA polymerase II.</text>
</comment>
<comment type="subunit">
    <text evidence="1">Belongs to the TFIID complex together with the TBP-associated factors (TAFs). Binds DNA as monomer.</text>
</comment>
<comment type="subcellular location">
    <subcellularLocation>
        <location evidence="1">Nucleus</location>
    </subcellularLocation>
</comment>
<comment type="similarity">
    <text evidence="3">Belongs to the TBP family.</text>
</comment>
<protein>
    <recommendedName>
        <fullName>TATA-box-binding protein</fullName>
    </recommendedName>
    <alternativeName>
        <fullName>TATA sequence-binding protein</fullName>
    </alternativeName>
    <alternativeName>
        <fullName>TATA-binding factor</fullName>
    </alternativeName>
    <alternativeName>
        <fullName>TATA-box factor</fullName>
    </alternativeName>
    <alternativeName>
        <fullName>Transcription initiation factor TFIID TBP subunit</fullName>
    </alternativeName>
</protein>
<evidence type="ECO:0000250" key="1">
    <source>
        <dbReference type="UniProtKB" id="P20226"/>
    </source>
</evidence>
<evidence type="ECO:0000256" key="2">
    <source>
        <dbReference type="SAM" id="MobiDB-lite"/>
    </source>
</evidence>
<evidence type="ECO:0000305" key="3"/>
<gene>
    <name type="primary">TBP</name>
</gene>
<sequence>MDQNNSLPPYAQGLASPQSAMTPGIPIFSPMMPYGTGLTPQPAQSTNSLSILEEQQRQQQQAAAQQSTSQPTQAPSGQTPQLFHSQTLTTAPLPGTTPLYPSPMTPMTPITPATPASESSGIVPQLQNIVSTVNLGCKLDLKTIALRARNAEYNPKRFAAVIMRIREPRTTALIFSSGKMVCTGAKSEEQSRLAARKYARVVQKLGFPAKFLDFKIQNMVGSCDVKFPIRLEGLVLTHQQFSSYEPELFPGLIYRMIKPRIVLLIFVSGKVVLTGAKVRGEIYEAFENIYPILKGFRKTT</sequence>
<accession>Q92117</accession>
<reference key="1">
    <citation type="journal article" date="1995" name="Gene">
        <title>Structures of genes encoding TATA box-binding proteins from Trimeresurus gramineus and T. flavoviridis snakes.</title>
        <authorList>
            <person name="Nakashima K."/>
            <person name="Nobuhisa I."/>
            <person name="Deshimaru M."/>
            <person name="Ogawa T."/>
            <person name="Shimohigashi Y."/>
            <person name="Fukumaki Y."/>
            <person name="Hattori M."/>
            <person name="Sakaki Y."/>
            <person name="Hattori S."/>
            <person name="Ohno M."/>
        </authorList>
    </citation>
    <scope>NUCLEOTIDE SEQUENCE [GENOMIC DNA]</scope>
    <source>
        <tissue>Liver</tissue>
    </source>
</reference>
<feature type="chain" id="PRO_0000153960" description="TATA-box-binding protein">
    <location>
        <begin position="1"/>
        <end position="300"/>
    </location>
</feature>
<feature type="repeat" description="1">
    <location>
        <begin position="126"/>
        <end position="202"/>
    </location>
</feature>
<feature type="repeat" description="2">
    <location>
        <begin position="216"/>
        <end position="293"/>
    </location>
</feature>
<feature type="region of interest" description="Disordered" evidence="2">
    <location>
        <begin position="1"/>
        <end position="22"/>
    </location>
</feature>
<feature type="region of interest" description="Disordered" evidence="2">
    <location>
        <begin position="53"/>
        <end position="119"/>
    </location>
</feature>
<feature type="compositionally biased region" description="Low complexity" evidence="2">
    <location>
        <begin position="57"/>
        <end position="99"/>
    </location>
</feature>
<feature type="compositionally biased region" description="Low complexity" evidence="2">
    <location>
        <begin position="107"/>
        <end position="117"/>
    </location>
</feature>
<proteinExistence type="inferred from homology"/>
<keyword id="KW-0238">DNA-binding</keyword>
<keyword id="KW-0539">Nucleus</keyword>
<keyword id="KW-0677">Repeat</keyword>
<keyword id="KW-0804">Transcription</keyword>
<dbReference type="EMBL" id="D31777">
    <property type="protein sequence ID" value="BAA06555.1"/>
    <property type="molecule type" value="Genomic_DNA"/>
</dbReference>
<dbReference type="SMR" id="Q92117"/>
<dbReference type="GO" id="GO:0005634">
    <property type="term" value="C:nucleus"/>
    <property type="evidence" value="ECO:0000250"/>
    <property type="project" value="UniProtKB"/>
</dbReference>
<dbReference type="GO" id="GO:0005669">
    <property type="term" value="C:transcription factor TFIID complex"/>
    <property type="evidence" value="ECO:0000250"/>
    <property type="project" value="UniProtKB"/>
</dbReference>
<dbReference type="GO" id="GO:0003677">
    <property type="term" value="F:DNA binding"/>
    <property type="evidence" value="ECO:0007669"/>
    <property type="project" value="UniProtKB-KW"/>
</dbReference>
<dbReference type="GO" id="GO:0000995">
    <property type="term" value="F:RNA polymerase III general transcription initiation factor activity"/>
    <property type="evidence" value="ECO:0000250"/>
    <property type="project" value="UniProtKB"/>
</dbReference>
<dbReference type="GO" id="GO:0006352">
    <property type="term" value="P:DNA-templated transcription initiation"/>
    <property type="evidence" value="ECO:0007669"/>
    <property type="project" value="InterPro"/>
</dbReference>
<dbReference type="GO" id="GO:0006366">
    <property type="term" value="P:transcription by RNA polymerase II"/>
    <property type="evidence" value="ECO:0000250"/>
    <property type="project" value="UniProtKB"/>
</dbReference>
<dbReference type="GO" id="GO:0006383">
    <property type="term" value="P:transcription by RNA polymerase III"/>
    <property type="evidence" value="ECO:0000250"/>
    <property type="project" value="UniProtKB"/>
</dbReference>
<dbReference type="CDD" id="cd04516">
    <property type="entry name" value="TBP_eukaryotes"/>
    <property type="match status" value="1"/>
</dbReference>
<dbReference type="FunFam" id="3.30.310.10:FF:000001">
    <property type="entry name" value="TATA-box-binding protein 2"/>
    <property type="match status" value="1"/>
</dbReference>
<dbReference type="FunFam" id="3.30.310.10:FF:000002">
    <property type="entry name" value="TATA-box-binding protein 2"/>
    <property type="match status" value="1"/>
</dbReference>
<dbReference type="Gene3D" id="3.30.310.10">
    <property type="entry name" value="TATA-Binding Protein"/>
    <property type="match status" value="2"/>
</dbReference>
<dbReference type="HAMAP" id="MF_00408">
    <property type="entry name" value="TATA_bind_prot_arch"/>
    <property type="match status" value="1"/>
</dbReference>
<dbReference type="InterPro" id="IPR000814">
    <property type="entry name" value="TBP"/>
</dbReference>
<dbReference type="InterPro" id="IPR030491">
    <property type="entry name" value="TBP_CS"/>
</dbReference>
<dbReference type="InterPro" id="IPR012295">
    <property type="entry name" value="TBP_dom_sf"/>
</dbReference>
<dbReference type="InterPro" id="IPR033710">
    <property type="entry name" value="TBP_eukaryotic"/>
</dbReference>
<dbReference type="PANTHER" id="PTHR10126">
    <property type="entry name" value="TATA-BOX BINDING PROTEIN"/>
    <property type="match status" value="1"/>
</dbReference>
<dbReference type="Pfam" id="PF00352">
    <property type="entry name" value="TBP"/>
    <property type="match status" value="2"/>
</dbReference>
<dbReference type="PRINTS" id="PR00686">
    <property type="entry name" value="TIFACTORIID"/>
</dbReference>
<dbReference type="SUPFAM" id="SSF55945">
    <property type="entry name" value="TATA-box binding protein-like"/>
    <property type="match status" value="2"/>
</dbReference>
<dbReference type="PROSITE" id="PS00351">
    <property type="entry name" value="TFIID"/>
    <property type="match status" value="2"/>
</dbReference>